<accession>P0C8A3</accession>
<dbReference type="RefSeq" id="XP_007661568.1">
    <property type="nucleotide sequence ID" value="XM_007663378.3"/>
</dbReference>
<dbReference type="SMR" id="P0C8A3"/>
<dbReference type="FunCoup" id="P0C8A3">
    <property type="interactions" value="230"/>
</dbReference>
<dbReference type="Ensembl" id="ENSOANT00000076305.1">
    <property type="protein sequence ID" value="ENSOANP00000052529.1"/>
    <property type="gene ID" value="ENSOANG00000050290.1"/>
</dbReference>
<dbReference type="GeneID" id="103168722"/>
<dbReference type="KEGG" id="oaa:103168722"/>
<dbReference type="GeneTree" id="ENSGT01000000220353"/>
<dbReference type="InParanoid" id="P0C8A3"/>
<dbReference type="OrthoDB" id="9837636at2759"/>
<dbReference type="Proteomes" id="UP000002279">
    <property type="component" value="Chromosome X2"/>
</dbReference>
<dbReference type="Bgee" id="ENSOANG00000050290">
    <property type="expression patterns" value="Expressed in ovary and 2 other cell types or tissues"/>
</dbReference>
<dbReference type="GO" id="GO:0005615">
    <property type="term" value="C:extracellular space"/>
    <property type="evidence" value="ECO:0000318"/>
    <property type="project" value="GO_Central"/>
</dbReference>
<dbReference type="GO" id="GO:0019731">
    <property type="term" value="P:antibacterial humoral response"/>
    <property type="evidence" value="ECO:0000318"/>
    <property type="project" value="GO_Central"/>
</dbReference>
<dbReference type="GO" id="GO:0061844">
    <property type="term" value="P:antimicrobial humoral immune response mediated by antimicrobial peptide"/>
    <property type="evidence" value="ECO:0000318"/>
    <property type="project" value="GO_Central"/>
</dbReference>
<dbReference type="GO" id="GO:0071222">
    <property type="term" value="P:cellular response to lipopolysaccharide"/>
    <property type="evidence" value="ECO:0000318"/>
    <property type="project" value="GO_Central"/>
</dbReference>
<dbReference type="GO" id="GO:0050829">
    <property type="term" value="P:defense response to Gram-negative bacterium"/>
    <property type="evidence" value="ECO:0000318"/>
    <property type="project" value="GO_Central"/>
</dbReference>
<dbReference type="GO" id="GO:0050830">
    <property type="term" value="P:defense response to Gram-positive bacterium"/>
    <property type="evidence" value="ECO:0000318"/>
    <property type="project" value="GO_Central"/>
</dbReference>
<dbReference type="GO" id="GO:0051673">
    <property type="term" value="P:disruption of plasma membrane integrity in another organism"/>
    <property type="evidence" value="ECO:0000318"/>
    <property type="project" value="GO_Central"/>
</dbReference>
<dbReference type="GO" id="GO:0002227">
    <property type="term" value="P:innate immune response in mucosa"/>
    <property type="evidence" value="ECO:0000318"/>
    <property type="project" value="GO_Central"/>
</dbReference>
<dbReference type="InterPro" id="IPR016327">
    <property type="entry name" value="Alpha-defensin"/>
</dbReference>
<dbReference type="InterPro" id="IPR006081">
    <property type="entry name" value="Alpha-defensin_C"/>
</dbReference>
<dbReference type="PANTHER" id="PTHR11876">
    <property type="entry name" value="ALPHA-DEFENSIN 1"/>
    <property type="match status" value="1"/>
</dbReference>
<dbReference type="PANTHER" id="PTHR11876:SF28">
    <property type="entry name" value="ALPHA-DEFENSIN 1"/>
    <property type="match status" value="1"/>
</dbReference>
<dbReference type="PIRSF" id="PIRSF001875">
    <property type="entry name" value="Alpha-defensin"/>
    <property type="match status" value="1"/>
</dbReference>
<dbReference type="PROSITE" id="PS00269">
    <property type="entry name" value="DEFENSIN"/>
    <property type="match status" value="1"/>
</dbReference>
<comment type="function">
    <text evidence="1">Has antimicrobial activity.</text>
</comment>
<comment type="subcellular location">
    <subcellularLocation>
        <location evidence="1">Secreted</location>
    </subcellularLocation>
</comment>
<comment type="tissue specificity">
    <text evidence="3">Highly expressed in spleen, and expressed at lower levels in intestin and lung.</text>
</comment>
<comment type="similarity">
    <text evidence="6">Belongs to the alpha-defensin family.</text>
</comment>
<comment type="online information" name="Platypus resources">
    <link uri="https://www.twinkl.ch/search?q=platypus"/>
</comment>
<sequence length="95" mass="10441">MRTLGLLLALLFLAAQTPAQLMGEEAEEATGRPEATEAQEAAAALMAARAADRHVTDPEQQRIITCSCRTFCFLGERISGRCYQSVFIYRLCCRG</sequence>
<feature type="signal peptide" evidence="2">
    <location>
        <begin position="1"/>
        <end position="19"/>
    </location>
</feature>
<feature type="propeptide" id="PRO_0000352687" evidence="2">
    <location>
        <begin position="20"/>
        <end position="61"/>
    </location>
</feature>
<feature type="peptide" id="PRO_0000352688" description="Defensin-A3">
    <location>
        <begin position="62"/>
        <end position="95"/>
    </location>
</feature>
<feature type="disulfide bond" evidence="1">
    <location>
        <begin position="66"/>
        <end position="93"/>
    </location>
</feature>
<feature type="disulfide bond" evidence="1">
    <location>
        <begin position="68"/>
        <end position="82"/>
    </location>
</feature>
<feature type="disulfide bond" evidence="1">
    <location>
        <begin position="72"/>
        <end position="92"/>
    </location>
</feature>
<proteinExistence type="evidence at transcript level"/>
<name>DEFA3_ORNAN</name>
<keyword id="KW-0044">Antibiotic</keyword>
<keyword id="KW-0929">Antimicrobial</keyword>
<keyword id="KW-0211">Defensin</keyword>
<keyword id="KW-1015">Disulfide bond</keyword>
<keyword id="KW-1185">Reference proteome</keyword>
<keyword id="KW-0964">Secreted</keyword>
<keyword id="KW-0732">Signal</keyword>
<protein>
    <recommendedName>
        <fullName evidence="7 8">Defensin-A3</fullName>
        <shortName evidence="4">DefA3</shortName>
        <shortName evidence="5">OaDefA3</shortName>
    </recommendedName>
</protein>
<reference key="1">
    <citation type="journal article" date="2008" name="Genome Res.">
        <title>Defensins and the convergent evolution of platypus and reptile venom genes.</title>
        <authorList>
            <person name="Whittington C.M."/>
            <person name="Papenfuss A.T."/>
            <person name="Bansal P."/>
            <person name="Torres A.M."/>
            <person name="Wong E.S."/>
            <person name="Deakin J.E."/>
            <person name="Graves T."/>
            <person name="Alsop A."/>
            <person name="Schatzkamer K."/>
            <person name="Kremitzki C."/>
            <person name="Ponting C.P."/>
            <person name="Temple-Smith P."/>
            <person name="Warren W.C."/>
            <person name="Kuchel P.W."/>
            <person name="Belov K."/>
        </authorList>
    </citation>
    <scope>NUCLEOTIDE SEQUENCE [MRNA]</scope>
</reference>
<reference key="2">
    <citation type="journal article" date="2008" name="Toxicon">
        <title>Expression patterns of platypus defensin and related venom genes across a range of tissue types reveal the possibility of broader functions for OvDLPs than previously suspected.</title>
        <authorList>
            <person name="Whittington C.M."/>
            <person name="Papenfuss A.T."/>
            <person name="Kuchel P.W."/>
            <person name="Belov K."/>
        </authorList>
    </citation>
    <scope>TISSUE SPECIFICITY</scope>
</reference>
<evidence type="ECO:0000250" key="1"/>
<evidence type="ECO:0000255" key="2"/>
<evidence type="ECO:0000269" key="3">
    <source>
    </source>
</evidence>
<evidence type="ECO:0000303" key="4">
    <source>
    </source>
</evidence>
<evidence type="ECO:0000303" key="5">
    <source>
    </source>
</evidence>
<evidence type="ECO:0000305" key="6"/>
<evidence type="ECO:0000305" key="7">
    <source>
    </source>
</evidence>
<evidence type="ECO:0000305" key="8">
    <source>
    </source>
</evidence>
<organism>
    <name type="scientific">Ornithorhynchus anatinus</name>
    <name type="common">Duckbill platypus</name>
    <dbReference type="NCBI Taxonomy" id="9258"/>
    <lineage>
        <taxon>Eukaryota</taxon>
        <taxon>Metazoa</taxon>
        <taxon>Chordata</taxon>
        <taxon>Craniata</taxon>
        <taxon>Vertebrata</taxon>
        <taxon>Euteleostomi</taxon>
        <taxon>Mammalia</taxon>
        <taxon>Monotremata</taxon>
        <taxon>Ornithorhynchidae</taxon>
        <taxon>Ornithorhynchus</taxon>
    </lineage>
</organism>